<evidence type="ECO:0000250" key="1">
    <source>
        <dbReference type="UniProtKB" id="P01602"/>
    </source>
</evidence>
<evidence type="ECO:0000255" key="2">
    <source>
        <dbReference type="PROSITE-ProRule" id="PRU00114"/>
    </source>
</evidence>
<evidence type="ECO:0000269" key="3">
    <source>
    </source>
</evidence>
<evidence type="ECO:0000303" key="4">
    <source>
    </source>
</evidence>
<evidence type="ECO:0000303" key="5">
    <source>
    </source>
</evidence>
<evidence type="ECO:0000303" key="6">
    <source>
    </source>
</evidence>
<evidence type="ECO:0000303" key="7">
    <source>
    </source>
</evidence>
<evidence type="ECO:0000303" key="8">
    <source>
    </source>
</evidence>
<evidence type="ECO:0000303" key="9">
    <source ref="5"/>
</evidence>
<evidence type="ECO:0000305" key="10"/>
<evidence type="ECO:0000305" key="11">
    <source>
    </source>
</evidence>
<proteinExistence type="evidence at protein level"/>
<reference key="1">
    <citation type="journal article" date="2005" name="Nature">
        <title>Generation and annotation of the DNA sequences of human chromosomes 2 and 4.</title>
        <authorList>
            <person name="Hillier L.W."/>
            <person name="Graves T.A."/>
            <person name="Fulton R.S."/>
            <person name="Fulton L.A."/>
            <person name="Pepin K.H."/>
            <person name="Minx P."/>
            <person name="Wagner-McPherson C."/>
            <person name="Layman D."/>
            <person name="Wylie K."/>
            <person name="Sekhon M."/>
            <person name="Becker M.C."/>
            <person name="Fewell G.A."/>
            <person name="Delehaunty K.D."/>
            <person name="Miner T.L."/>
            <person name="Nash W.E."/>
            <person name="Kremitzki C."/>
            <person name="Oddy L."/>
            <person name="Du H."/>
            <person name="Sun H."/>
            <person name="Bradshaw-Cordum H."/>
            <person name="Ali J."/>
            <person name="Carter J."/>
            <person name="Cordes M."/>
            <person name="Harris A."/>
            <person name="Isak A."/>
            <person name="van Brunt A."/>
            <person name="Nguyen C."/>
            <person name="Du F."/>
            <person name="Courtney L."/>
            <person name="Kalicki J."/>
            <person name="Ozersky P."/>
            <person name="Abbott S."/>
            <person name="Armstrong J."/>
            <person name="Belter E.A."/>
            <person name="Caruso L."/>
            <person name="Cedroni M."/>
            <person name="Cotton M."/>
            <person name="Davidson T."/>
            <person name="Desai A."/>
            <person name="Elliott G."/>
            <person name="Erb T."/>
            <person name="Fronick C."/>
            <person name="Gaige T."/>
            <person name="Haakenson W."/>
            <person name="Haglund K."/>
            <person name="Holmes A."/>
            <person name="Harkins R."/>
            <person name="Kim K."/>
            <person name="Kruchowski S.S."/>
            <person name="Strong C.M."/>
            <person name="Grewal N."/>
            <person name="Goyea E."/>
            <person name="Hou S."/>
            <person name="Levy A."/>
            <person name="Martinka S."/>
            <person name="Mead K."/>
            <person name="McLellan M.D."/>
            <person name="Meyer R."/>
            <person name="Randall-Maher J."/>
            <person name="Tomlinson C."/>
            <person name="Dauphin-Kohlberg S."/>
            <person name="Kozlowicz-Reilly A."/>
            <person name="Shah N."/>
            <person name="Swearengen-Shahid S."/>
            <person name="Snider J."/>
            <person name="Strong J.T."/>
            <person name="Thompson J."/>
            <person name="Yoakum M."/>
            <person name="Leonard S."/>
            <person name="Pearman C."/>
            <person name="Trani L."/>
            <person name="Radionenko M."/>
            <person name="Waligorski J.E."/>
            <person name="Wang C."/>
            <person name="Rock S.M."/>
            <person name="Tin-Wollam A.-M."/>
            <person name="Maupin R."/>
            <person name="Latreille P."/>
            <person name="Wendl M.C."/>
            <person name="Yang S.-P."/>
            <person name="Pohl C."/>
            <person name="Wallis J.W."/>
            <person name="Spieth J."/>
            <person name="Bieri T.A."/>
            <person name="Berkowicz N."/>
            <person name="Nelson J.O."/>
            <person name="Osborne J."/>
            <person name="Ding L."/>
            <person name="Meyer R."/>
            <person name="Sabo A."/>
            <person name="Shotland Y."/>
            <person name="Sinha P."/>
            <person name="Wohldmann P.E."/>
            <person name="Cook L.L."/>
            <person name="Hickenbotham M.T."/>
            <person name="Eldred J."/>
            <person name="Williams D."/>
            <person name="Jones T.A."/>
            <person name="She X."/>
            <person name="Ciccarelli F.D."/>
            <person name="Izaurralde E."/>
            <person name="Taylor J."/>
            <person name="Schmutz J."/>
            <person name="Myers R.M."/>
            <person name="Cox D.R."/>
            <person name="Huang X."/>
            <person name="McPherson J.D."/>
            <person name="Mardis E.R."/>
            <person name="Clifton S.W."/>
            <person name="Warren W.C."/>
            <person name="Chinwalla A.T."/>
            <person name="Eddy S.R."/>
            <person name="Marra M.A."/>
            <person name="Ovcharenko I."/>
            <person name="Furey T.S."/>
            <person name="Miller W."/>
            <person name="Eichler E.E."/>
            <person name="Bork P."/>
            <person name="Suyama M."/>
            <person name="Torrents D."/>
            <person name="Waterston R.H."/>
            <person name="Wilson R.K."/>
        </authorList>
    </citation>
    <scope>NUCLEOTIDE SEQUENCE [LARGE SCALE GENOMIC DNA] (IMGT ALLELE IGKV2D-40*01)</scope>
</reference>
<reference key="2">
    <citation type="journal article" date="1967" name="Hoppe-Seyler's Z. Physiol. Chem.">
        <title>The complete amino acid sequence of Bence Jones protein Cum (kappa-type).</title>
        <authorList>
            <person name="Hilschmann N."/>
        </authorList>
    </citation>
    <scope>PROTEIN SEQUENCE OF 20-121</scope>
</reference>
<reference key="3">
    <citation type="journal article" date="1969" name="Naturwissenschaften">
        <title>Molecular basis of antibody formation.</title>
        <authorList>
            <person name="Hilschmann N."/>
        </authorList>
    </citation>
    <scope>SEQUENCE REVISION TO 69; 71; 115 AND 116</scope>
</reference>
<reference key="4">
    <citation type="journal article" date="2001" name="Exp. Clin. Immunogenet.">
        <title>Nomenclature of the human immunoglobulin kappa (IGK) genes.</title>
        <authorList>
            <person name="Lefranc M.P."/>
        </authorList>
    </citation>
    <scope>NOMEMCLATURE</scope>
</reference>
<reference key="5">
    <citation type="book" date="2001" name="The Immunoglobulin FactsBook.">
        <title>The Immunoglobulin FactsBook.</title>
        <editorList>
            <person name="Lefranc M.P."/>
            <person name="Lefranc G."/>
        </editorList>
        <authorList>
            <person name="Lefranc M.P."/>
            <person name="Lefranc G."/>
        </authorList>
    </citation>
    <scope>NOMENCLATURE</scope>
</reference>
<reference key="6">
    <citation type="journal article" date="2007" name="Annu. Rev. Genet.">
        <title>Immunoglobulin somatic hypermutation.</title>
        <authorList>
            <person name="Teng G."/>
            <person name="Papavasiliou F.N."/>
        </authorList>
    </citation>
    <scope>REVIEW ON SOMATIC HYPERMUTATION</scope>
</reference>
<reference key="7">
    <citation type="journal article" date="2010" name="J. Allergy Clin. Immunol.">
        <title>Structure and function of immunoglobulins.</title>
        <authorList>
            <person name="Schroeder H.W. Jr."/>
            <person name="Cavacini L."/>
        </authorList>
    </citation>
    <scope>REVIEW ON IMMUNOGLOBULINS</scope>
</reference>
<reference key="8">
    <citation type="journal article" date="2012" name="Nat. Rev. Immunol.">
        <title>Molecular programming of B cell memory.</title>
        <authorList>
            <person name="McHeyzer-Williams M."/>
            <person name="Okitsu S."/>
            <person name="Wang N."/>
            <person name="McHeyzer-Williams L."/>
        </authorList>
    </citation>
    <scope>REVIEW ON FUNCTION</scope>
</reference>
<reference key="9">
    <citation type="journal article" date="2014" name="Front. Immunol.">
        <title>Immunoglobulin and T Cell Receptor Genes: IMGT((R)) and the Birth and Rise of Immunoinformatics.</title>
        <authorList>
            <person name="Lefranc M.P."/>
        </authorList>
    </citation>
    <scope>NOMENCLATURE</scope>
</reference>
<accession>P01614</accession>
<accession>A0A075B6R1</accession>
<gene>
    <name evidence="4 9" type="primary">IGKV2D-40</name>
</gene>
<comment type="function">
    <text evidence="5 6 7 8">V region of the variable domain of immunoglobulin light chains that participates in the antigen recognition (PubMed:24600447). Immunoglobulins, also known as antibodies, are membrane-bound or secreted glycoproteins produced by B lymphocytes. In the recognition phase of humoral immunity, the membrane-bound immunoglobulins serve as receptors which, upon binding of a specific antigen, trigger the clonal expansion and differentiation of B lymphocytes into immunoglobulins-secreting plasma cells. Secreted immunoglobulins mediate the effector phase of humoral immunity, which results in the elimination of bound antigens (PubMed:20176268, PubMed:22158414). The antigen binding site is formed by the variable domain of one heavy chain, together with that of its associated light chain. Thus, each immunoglobulin has two antigen binding sites with remarkable affinity for a particular antigen. The variable domains are assembled by a process called V-(D)-J rearrangement and can then be subjected to somatic hypermutations which, after exposure to antigen and selection, allow affinity maturation for a particular antigen (PubMed:17576170, PubMed:20176268).</text>
</comment>
<comment type="subunit">
    <text evidence="6">Immunoglobulins are composed of two identical heavy chains and two identical light chains; disulfide-linked.</text>
</comment>
<comment type="subcellular location">
    <subcellularLocation>
        <location evidence="6 7">Secreted</location>
    </subcellularLocation>
    <subcellularLocation>
        <location evidence="6 7">Cell membrane</location>
    </subcellularLocation>
</comment>
<comment type="polymorphism">
    <text>There are several alleles. The sequence shown is that of IMGT allele IGKV2D-40*01.</text>
</comment>
<comment type="caution">
    <text evidence="10">For an example of a full-length immunoglobulin kappa light chain see AC P0DOX7.</text>
</comment>
<organism>
    <name type="scientific">Homo sapiens</name>
    <name type="common">Human</name>
    <dbReference type="NCBI Taxonomy" id="9606"/>
    <lineage>
        <taxon>Eukaryota</taxon>
        <taxon>Metazoa</taxon>
        <taxon>Chordata</taxon>
        <taxon>Craniata</taxon>
        <taxon>Vertebrata</taxon>
        <taxon>Euteleostomi</taxon>
        <taxon>Mammalia</taxon>
        <taxon>Eutheria</taxon>
        <taxon>Euarchontoglires</taxon>
        <taxon>Primates</taxon>
        <taxon>Haplorrhini</taxon>
        <taxon>Catarrhini</taxon>
        <taxon>Hominidae</taxon>
        <taxon>Homo</taxon>
    </lineage>
</organism>
<keyword id="KW-1064">Adaptive immunity</keyword>
<keyword id="KW-1003">Cell membrane</keyword>
<keyword id="KW-0903">Direct protein sequencing</keyword>
<keyword id="KW-1015">Disulfide bond</keyword>
<keyword id="KW-0391">Immunity</keyword>
<keyword id="KW-1280">Immunoglobulin</keyword>
<keyword id="KW-0393">Immunoglobulin domain</keyword>
<keyword id="KW-0472">Membrane</keyword>
<keyword id="KW-1185">Reference proteome</keyword>
<keyword id="KW-0964">Secreted</keyword>
<keyword id="KW-0732">Signal</keyword>
<dbReference type="EMBL" id="AC233264">
    <property type="status" value="NOT_ANNOTATED_CDS"/>
    <property type="molecule type" value="Genomic_DNA"/>
</dbReference>
<dbReference type="PIR" id="B91639">
    <property type="entry name" value="K2HUCM"/>
</dbReference>
<dbReference type="EMDB" id="EMD-23167"/>
<dbReference type="SMR" id="P01614"/>
<dbReference type="FunCoup" id="P01614">
    <property type="interactions" value="463"/>
</dbReference>
<dbReference type="IntAct" id="P01614">
    <property type="interactions" value="6"/>
</dbReference>
<dbReference type="IMGT_GENE-DB" id="IGKV2D-40"/>
<dbReference type="GlyGen" id="P01614">
    <property type="glycosylation" value="1 site"/>
</dbReference>
<dbReference type="iPTMnet" id="P01614"/>
<dbReference type="PhosphoSitePlus" id="P01614"/>
<dbReference type="BioMuta" id="IGKV2D-40"/>
<dbReference type="DMDM" id="125782"/>
<dbReference type="jPOST" id="P01614"/>
<dbReference type="MassIVE" id="P01614"/>
<dbReference type="PRIDE" id="P01614"/>
<dbReference type="Ensembl" id="ENST00000429992.3">
    <property type="protein sequence ID" value="ENSP00000409413.3"/>
    <property type="gene ID" value="ENSG00000251039.4"/>
</dbReference>
<dbReference type="AGR" id="HGNC:5804"/>
<dbReference type="GeneCards" id="IGKV2D-40"/>
<dbReference type="HGNC" id="HGNC:5804">
    <property type="gene designation" value="IGKV2D-40"/>
</dbReference>
<dbReference type="HPA" id="ENSG00000251039">
    <property type="expression patterns" value="Tissue enriched (lymphoid)"/>
</dbReference>
<dbReference type="neXtProt" id="NX_P01614"/>
<dbReference type="VEuPathDB" id="HostDB:ENSG00000251039"/>
<dbReference type="GeneTree" id="ENSGT00940000154039"/>
<dbReference type="InParanoid" id="P01614"/>
<dbReference type="OrthoDB" id="8908372at2759"/>
<dbReference type="PAN-GO" id="P01614">
    <property type="GO annotations" value="3 GO annotations based on evolutionary models"/>
</dbReference>
<dbReference type="PathwayCommons" id="P01614"/>
<dbReference type="Reactome" id="R-HSA-166663">
    <property type="pathway name" value="Initial triggering of complement"/>
</dbReference>
<dbReference type="Reactome" id="R-HSA-173623">
    <property type="pathway name" value="Classical antibody-mediated complement activation"/>
</dbReference>
<dbReference type="Reactome" id="R-HSA-198933">
    <property type="pathway name" value="Immunoregulatory interactions between a Lymphoid and a non-Lymphoid cell"/>
</dbReference>
<dbReference type="Reactome" id="R-HSA-202733">
    <property type="pathway name" value="Cell surface interactions at the vascular wall"/>
</dbReference>
<dbReference type="Reactome" id="R-HSA-2029481">
    <property type="pathway name" value="FCGR activation"/>
</dbReference>
<dbReference type="Reactome" id="R-HSA-2029482">
    <property type="pathway name" value="Regulation of actin dynamics for phagocytic cup formation"/>
</dbReference>
<dbReference type="Reactome" id="R-HSA-2029485">
    <property type="pathway name" value="Role of phospholipids in phagocytosis"/>
</dbReference>
<dbReference type="Reactome" id="R-HSA-2168880">
    <property type="pathway name" value="Scavenging of heme from plasma"/>
</dbReference>
<dbReference type="Reactome" id="R-HSA-2454202">
    <property type="pathway name" value="Fc epsilon receptor (FCERI) signaling"/>
</dbReference>
<dbReference type="Reactome" id="R-HSA-2730905">
    <property type="pathway name" value="Role of LAT2/NTAL/LAB on calcium mobilization"/>
</dbReference>
<dbReference type="Reactome" id="R-HSA-2871796">
    <property type="pathway name" value="FCERI mediated MAPK activation"/>
</dbReference>
<dbReference type="Reactome" id="R-HSA-2871809">
    <property type="pathway name" value="FCERI mediated Ca+2 mobilization"/>
</dbReference>
<dbReference type="Reactome" id="R-HSA-2871837">
    <property type="pathway name" value="FCERI mediated NF-kB activation"/>
</dbReference>
<dbReference type="Reactome" id="R-HSA-5690714">
    <property type="pathway name" value="CD22 mediated BCR regulation"/>
</dbReference>
<dbReference type="Reactome" id="R-HSA-9664323">
    <property type="pathway name" value="FCGR3A-mediated IL10 synthesis"/>
</dbReference>
<dbReference type="Reactome" id="R-HSA-9664422">
    <property type="pathway name" value="FCGR3A-mediated phagocytosis"/>
</dbReference>
<dbReference type="Reactome" id="R-HSA-9679191">
    <property type="pathway name" value="Potential therapeutics for SARS"/>
</dbReference>
<dbReference type="Reactome" id="R-HSA-977606">
    <property type="pathway name" value="Regulation of Complement cascade"/>
</dbReference>
<dbReference type="Reactome" id="R-HSA-983695">
    <property type="pathway name" value="Antigen activates B Cell Receptor (BCR) leading to generation of second messengers"/>
</dbReference>
<dbReference type="SignaLink" id="P01614"/>
<dbReference type="ChiTaRS" id="IGKV2D-40">
    <property type="organism name" value="human"/>
</dbReference>
<dbReference type="Pharos" id="P01614">
    <property type="development level" value="Tdark"/>
</dbReference>
<dbReference type="PRO" id="PR:P01614"/>
<dbReference type="Proteomes" id="UP000005640">
    <property type="component" value="Chromosome 2"/>
</dbReference>
<dbReference type="RNAct" id="P01614">
    <property type="molecule type" value="protein"/>
</dbReference>
<dbReference type="Bgee" id="ENSG00000251039">
    <property type="expression patterns" value="Expressed in male germ line stem cell (sensu Vertebrata) in testis and 80 other cell types or tissues"/>
</dbReference>
<dbReference type="GO" id="GO:0072562">
    <property type="term" value="C:blood microparticle"/>
    <property type="evidence" value="ECO:0007005"/>
    <property type="project" value="UniProtKB"/>
</dbReference>
<dbReference type="GO" id="GO:0070062">
    <property type="term" value="C:extracellular exosome"/>
    <property type="evidence" value="ECO:0007005"/>
    <property type="project" value="UniProtKB"/>
</dbReference>
<dbReference type="GO" id="GO:0005576">
    <property type="term" value="C:extracellular region"/>
    <property type="evidence" value="ECO:0000304"/>
    <property type="project" value="Reactome"/>
</dbReference>
<dbReference type="GO" id="GO:0019814">
    <property type="term" value="C:immunoglobulin complex"/>
    <property type="evidence" value="ECO:0000318"/>
    <property type="project" value="GO_Central"/>
</dbReference>
<dbReference type="GO" id="GO:0005886">
    <property type="term" value="C:plasma membrane"/>
    <property type="evidence" value="ECO:0000304"/>
    <property type="project" value="Reactome"/>
</dbReference>
<dbReference type="GO" id="GO:0003823">
    <property type="term" value="F:antigen binding"/>
    <property type="evidence" value="ECO:0000303"/>
    <property type="project" value="UniProtKB"/>
</dbReference>
<dbReference type="GO" id="GO:0002250">
    <property type="term" value="P:adaptive immune response"/>
    <property type="evidence" value="ECO:0007669"/>
    <property type="project" value="UniProtKB-KW"/>
</dbReference>
<dbReference type="GO" id="GO:0006955">
    <property type="term" value="P:immune response"/>
    <property type="evidence" value="ECO:0000318"/>
    <property type="project" value="GO_Central"/>
</dbReference>
<dbReference type="FunFam" id="2.60.40.10:FF:000365">
    <property type="entry name" value="If kappa light chain"/>
    <property type="match status" value="1"/>
</dbReference>
<dbReference type="Gene3D" id="2.60.40.10">
    <property type="entry name" value="Immunoglobulins"/>
    <property type="match status" value="1"/>
</dbReference>
<dbReference type="InterPro" id="IPR007110">
    <property type="entry name" value="Ig-like_dom"/>
</dbReference>
<dbReference type="InterPro" id="IPR036179">
    <property type="entry name" value="Ig-like_dom_sf"/>
</dbReference>
<dbReference type="InterPro" id="IPR013783">
    <property type="entry name" value="Ig-like_fold"/>
</dbReference>
<dbReference type="InterPro" id="IPR013106">
    <property type="entry name" value="Ig_V-set"/>
</dbReference>
<dbReference type="InterPro" id="IPR050150">
    <property type="entry name" value="IgV_Light_Chain"/>
</dbReference>
<dbReference type="PANTHER" id="PTHR23267">
    <property type="entry name" value="IMMUNOGLOBULIN LIGHT CHAIN"/>
    <property type="match status" value="1"/>
</dbReference>
<dbReference type="Pfam" id="PF07686">
    <property type="entry name" value="V-set"/>
    <property type="match status" value="1"/>
</dbReference>
<dbReference type="SMART" id="SM00406">
    <property type="entry name" value="IGv"/>
    <property type="match status" value="1"/>
</dbReference>
<dbReference type="SUPFAM" id="SSF48726">
    <property type="entry name" value="Immunoglobulin"/>
    <property type="match status" value="1"/>
</dbReference>
<dbReference type="PROSITE" id="PS50835">
    <property type="entry name" value="IG_LIKE"/>
    <property type="match status" value="1"/>
</dbReference>
<name>KVD40_HUMAN</name>
<feature type="signal peptide" evidence="3">
    <location>
        <begin position="1"/>
        <end position="19"/>
    </location>
</feature>
<feature type="chain" id="PRO_0000059758" description="Immunoglobulin kappa variable 2D-40" evidence="3">
    <location>
        <begin position="20"/>
        <end position="121"/>
    </location>
</feature>
<feature type="domain" description="Ig-like" evidence="2">
    <location>
        <begin position="20"/>
        <end position="121" status="greater than"/>
    </location>
</feature>
<feature type="region of interest" description="Framework-1" evidence="1">
    <location>
        <begin position="21"/>
        <end position="43"/>
    </location>
</feature>
<feature type="region of interest" description="Complementarity-determining-1" evidence="1">
    <location>
        <begin position="44"/>
        <end position="60"/>
    </location>
</feature>
<feature type="region of interest" description="Framework-2" evidence="1">
    <location>
        <begin position="61"/>
        <end position="75"/>
    </location>
</feature>
<feature type="region of interest" description="Complementarity-determining-2" evidence="1">
    <location>
        <begin position="76"/>
        <end position="82"/>
    </location>
</feature>
<feature type="region of interest" description="Framework-3" evidence="1">
    <location>
        <begin position="83"/>
        <end position="114"/>
    </location>
</feature>
<feature type="region of interest" description="Complementarity-determining-3" evidence="1">
    <location>
        <begin position="115"/>
        <end position="121" status="greater than"/>
    </location>
</feature>
<feature type="disulfide bond" evidence="2">
    <location>
        <begin position="43"/>
        <end position="114"/>
    </location>
</feature>
<feature type="sequence conflict" description="In Ref. 2; AA sequence." evidence="10" ref="2">
    <original>D</original>
    <variation>G</variation>
    <location>
        <position position="53"/>
    </location>
</feature>
<feature type="sequence conflict" description="In Ref. 2; AA sequence." evidence="10" ref="2">
    <original>D</original>
    <variation>N</variation>
    <location>
        <position position="60"/>
    </location>
</feature>
<feature type="sequence conflict" description="In Ref. 2; AA sequence." evidence="10" ref="2">
    <original>P</original>
    <variation>A</variation>
    <location>
        <position position="66"/>
    </location>
</feature>
<feature type="sequence conflict" description="In Ref. 2; AA sequence." evidence="10" ref="2">
    <original>E</original>
    <variation>Q</variation>
    <location>
        <position position="105"/>
    </location>
</feature>
<feature type="sequence conflict" description="In Ref. 2; AA sequence." evidence="10" ref="2">
    <original>IEF</original>
    <variation>LEI</variation>
    <location>
        <begin position="118"/>
        <end position="120"/>
    </location>
</feature>
<feature type="non-terminal residue">
    <location>
        <position position="121"/>
    </location>
</feature>
<sequence length="121" mass="13310">MRLPAQLLGLLMLWVPGSSEDIVMTQTPLSLPVTPGEPASISCRSSQSLLDSDDGNTYLDWYLQKPGQSPQLLIYTLSYRASGVPDRFSGSGSGTDFTLKISRVEAEDVGVYYCMQRIEFP</sequence>
<protein>
    <recommendedName>
        <fullName evidence="4 9">Immunoglobulin kappa variable 2D-40</fullName>
    </recommendedName>
    <alternativeName>
        <fullName evidence="11">Ig kappa chain V-II region Cum</fullName>
    </alternativeName>
</protein>